<evidence type="ECO:0000250" key="1">
    <source>
        <dbReference type="UniProtKB" id="Q5XI67"/>
    </source>
</evidence>
<evidence type="ECO:0000255" key="2">
    <source>
        <dbReference type="PROSITE-ProRule" id="PRU00080"/>
    </source>
</evidence>
<evidence type="ECO:0000255" key="3">
    <source>
        <dbReference type="PROSITE-ProRule" id="PRU00207"/>
    </source>
</evidence>
<evidence type="ECO:0000256" key="4">
    <source>
        <dbReference type="SAM" id="MobiDB-lite"/>
    </source>
</evidence>
<evidence type="ECO:0000269" key="5">
    <source>
    </source>
</evidence>
<evidence type="ECO:0000305" key="6"/>
<dbReference type="EMBL" id="AK006369">
    <property type="protein sequence ID" value="BAB24551.1"/>
    <property type="molecule type" value="mRNA"/>
</dbReference>
<dbReference type="EMBL" id="AK083479">
    <property type="protein sequence ID" value="BAC38931.1"/>
    <property type="molecule type" value="mRNA"/>
</dbReference>
<dbReference type="EMBL" id="AK135274">
    <property type="protein sequence ID" value="BAE22469.1"/>
    <property type="molecule type" value="mRNA"/>
</dbReference>
<dbReference type="EMBL" id="CH466562">
    <property type="protein sequence ID" value="EDL03517.1"/>
    <property type="molecule type" value="Genomic_DNA"/>
</dbReference>
<dbReference type="EMBL" id="BC037691">
    <property type="protein sequence ID" value="AAH37691.1"/>
    <property type="status" value="ALT_INIT"/>
    <property type="molecule type" value="mRNA"/>
</dbReference>
<dbReference type="CCDS" id="CCDS23697.1"/>
<dbReference type="RefSeq" id="NP_001161769.1">
    <property type="nucleotide sequence ID" value="NM_001168297.1"/>
</dbReference>
<dbReference type="RefSeq" id="NP_082244.2">
    <property type="nucleotide sequence ID" value="NM_027968.3"/>
</dbReference>
<dbReference type="RefSeq" id="XP_006512922.1">
    <property type="nucleotide sequence ID" value="XM_006512859.5"/>
</dbReference>
<dbReference type="SMR" id="Q8BJL1"/>
<dbReference type="BioGRID" id="214990">
    <property type="interactions" value="2"/>
</dbReference>
<dbReference type="FunCoup" id="Q8BJL1">
    <property type="interactions" value="156"/>
</dbReference>
<dbReference type="MINT" id="Q8BJL1"/>
<dbReference type="STRING" id="10090.ENSMUSP00000117687"/>
<dbReference type="GlyGen" id="Q8BJL1">
    <property type="glycosylation" value="2 sites, 1 O-linked glycan (2 sites)"/>
</dbReference>
<dbReference type="iPTMnet" id="Q8BJL1"/>
<dbReference type="PhosphoSitePlus" id="Q8BJL1"/>
<dbReference type="SwissPalm" id="Q8BJL1"/>
<dbReference type="PaxDb" id="10090-ENSMUSP00000117687"/>
<dbReference type="PeptideAtlas" id="Q8BJL1"/>
<dbReference type="ProteomicsDB" id="267350"/>
<dbReference type="Pumba" id="Q8BJL1"/>
<dbReference type="Antibodypedia" id="33222">
    <property type="antibodies" value="51 antibodies from 13 providers"/>
</dbReference>
<dbReference type="Ensembl" id="ENSMUST00000070300.5">
    <property type="protein sequence ID" value="ENSMUSP00000068230.5"/>
    <property type="gene ID" value="ENSMUSG00000047648.14"/>
</dbReference>
<dbReference type="Ensembl" id="ENSMUST00000129456.8">
    <property type="protein sequence ID" value="ENSMUSP00000117687.2"/>
    <property type="gene ID" value="ENSMUSG00000047648.14"/>
</dbReference>
<dbReference type="GeneID" id="71865"/>
<dbReference type="KEGG" id="mmu:71865"/>
<dbReference type="UCSC" id="uc007ejt.2">
    <property type="organism name" value="mouse"/>
</dbReference>
<dbReference type="AGR" id="MGI:1919115"/>
<dbReference type="CTD" id="84085"/>
<dbReference type="MGI" id="MGI:1919115">
    <property type="gene designation" value="Fbxo30"/>
</dbReference>
<dbReference type="VEuPathDB" id="HostDB:ENSMUSG00000047648"/>
<dbReference type="eggNOG" id="ENOG502QTD9">
    <property type="taxonomic scope" value="Eukaryota"/>
</dbReference>
<dbReference type="GeneTree" id="ENSGT00950000183204"/>
<dbReference type="HOGENOM" id="CLU_013357_0_0_1"/>
<dbReference type="InParanoid" id="Q8BJL1"/>
<dbReference type="OMA" id="SSWQVKE"/>
<dbReference type="OrthoDB" id="5918172at2759"/>
<dbReference type="PhylomeDB" id="Q8BJL1"/>
<dbReference type="TreeFam" id="TF343227"/>
<dbReference type="Reactome" id="R-MMU-8951664">
    <property type="pathway name" value="Neddylation"/>
</dbReference>
<dbReference type="Reactome" id="R-MMU-983168">
    <property type="pathway name" value="Antigen processing: Ubiquitination &amp; Proteasome degradation"/>
</dbReference>
<dbReference type="UniPathway" id="UPA00143"/>
<dbReference type="BioGRID-ORCS" id="71865">
    <property type="hits" value="2 hits in 77 CRISPR screens"/>
</dbReference>
<dbReference type="ChiTaRS" id="Fbxo30">
    <property type="organism name" value="mouse"/>
</dbReference>
<dbReference type="PRO" id="PR:Q8BJL1"/>
<dbReference type="Proteomes" id="UP000000589">
    <property type="component" value="Chromosome 10"/>
</dbReference>
<dbReference type="RNAct" id="Q8BJL1">
    <property type="molecule type" value="protein"/>
</dbReference>
<dbReference type="Bgee" id="ENSMUSG00000047648">
    <property type="expression patterns" value="Expressed in spermatid and 223 other cell types or tissues"/>
</dbReference>
<dbReference type="GO" id="GO:0061630">
    <property type="term" value="F:ubiquitin protein ligase activity"/>
    <property type="evidence" value="ECO:0007669"/>
    <property type="project" value="InterPro"/>
</dbReference>
<dbReference type="GO" id="GO:0008270">
    <property type="term" value="F:zinc ion binding"/>
    <property type="evidence" value="ECO:0007669"/>
    <property type="project" value="UniProtKB-KW"/>
</dbReference>
<dbReference type="GO" id="GO:0006325">
    <property type="term" value="P:chromatin organization"/>
    <property type="evidence" value="ECO:0000315"/>
    <property type="project" value="MGI"/>
</dbReference>
<dbReference type="GO" id="GO:0030261">
    <property type="term" value="P:chromosome condensation"/>
    <property type="evidence" value="ECO:0000315"/>
    <property type="project" value="MGI"/>
</dbReference>
<dbReference type="GO" id="GO:0007059">
    <property type="term" value="P:chromosome segregation"/>
    <property type="evidence" value="ECO:0000315"/>
    <property type="project" value="MGI"/>
</dbReference>
<dbReference type="GO" id="GO:0010467">
    <property type="term" value="P:gene expression"/>
    <property type="evidence" value="ECO:0000315"/>
    <property type="project" value="MGI"/>
</dbReference>
<dbReference type="GO" id="GO:0016567">
    <property type="term" value="P:protein ubiquitination"/>
    <property type="evidence" value="ECO:0007669"/>
    <property type="project" value="UniProtKB-UniPathway"/>
</dbReference>
<dbReference type="CDD" id="cd22174">
    <property type="entry name" value="F-box_FBXO30"/>
    <property type="match status" value="1"/>
</dbReference>
<dbReference type="FunFam" id="3.30.40.150:FF:000001">
    <property type="entry name" value="F-box only protein 30"/>
    <property type="match status" value="1"/>
</dbReference>
<dbReference type="Gene3D" id="1.20.1280.50">
    <property type="match status" value="1"/>
</dbReference>
<dbReference type="Gene3D" id="3.30.40.150">
    <property type="entry name" value="TRAF-like zinc-finger, N-terminal subdomain"/>
    <property type="match status" value="1"/>
</dbReference>
<dbReference type="Gene3D" id="3.30.40.10">
    <property type="entry name" value="Zinc/RING finger domain, C3HC4 (zinc finger)"/>
    <property type="match status" value="1"/>
</dbReference>
<dbReference type="InterPro" id="IPR036047">
    <property type="entry name" value="F-box-like_dom_sf"/>
</dbReference>
<dbReference type="InterPro" id="IPR001810">
    <property type="entry name" value="F-box_dom"/>
</dbReference>
<dbReference type="InterPro" id="IPR031890">
    <property type="entry name" value="Fbxo30/Fbxo40"/>
</dbReference>
<dbReference type="InterPro" id="IPR013083">
    <property type="entry name" value="Znf_RING/FYVE/PHD"/>
</dbReference>
<dbReference type="InterPro" id="IPR001293">
    <property type="entry name" value="Znf_TRAF"/>
</dbReference>
<dbReference type="InterPro" id="IPR043013">
    <property type="entry name" value="Znf_TRAF_N"/>
</dbReference>
<dbReference type="PANTHER" id="PTHR15933:SF13">
    <property type="entry name" value="F-BOX ONLY PROTEIN 30"/>
    <property type="match status" value="1"/>
</dbReference>
<dbReference type="PANTHER" id="PTHR15933">
    <property type="entry name" value="PROTEIN CBG16327"/>
    <property type="match status" value="1"/>
</dbReference>
<dbReference type="Pfam" id="PF15966">
    <property type="entry name" value="F-box_4"/>
    <property type="match status" value="1"/>
</dbReference>
<dbReference type="Pfam" id="PF15965">
    <property type="entry name" value="zf-TRAF_2"/>
    <property type="match status" value="1"/>
</dbReference>
<dbReference type="SUPFAM" id="SSF81383">
    <property type="entry name" value="F-box domain"/>
    <property type="match status" value="1"/>
</dbReference>
<dbReference type="SUPFAM" id="SSF49599">
    <property type="entry name" value="TRAF domain-like"/>
    <property type="match status" value="1"/>
</dbReference>
<dbReference type="PROSITE" id="PS50181">
    <property type="entry name" value="FBOX"/>
    <property type="match status" value="1"/>
</dbReference>
<dbReference type="PROSITE" id="PS50145">
    <property type="entry name" value="ZF_TRAF"/>
    <property type="match status" value="1"/>
</dbReference>
<sequence length="746" mass="82687">MEEEVQQHSHCMNCVSRRCMTRPEPGVSCDLIGCPLVCGAVFHSCKADEHRLLCPFERVACLNRNFGCPFTLARNKVAEHLEMCPASVVCCTMEWNRWPVSYSDRKSYESLSRDVDEVAQLDMALALQDQRMLLESLKVATMMSKATDKISEPREQISVKSSVQEIPRTNGLVSVDEESYGALYQATVETTRSLAAALDILNSATRDIGMLNTSLHATANEMDEENNKESFQDKNLKDQDHLDEGEIGAVGGVDYSGTSQNAQAEQNGSSDLLCDLNPSSNGTSALCNGFPLEKMCIQVKGQDQNFHGDSTESNITNGDCVEADGTSEPSSSLVVPEQLREISPFSALPDSTFQQILMPDEDDEKDLCWKKVDLGDLKDVNGSPFSHAPSFKFLSNSWYIPKEDKAVDTSDLEVAEDPMGLQGIDLITAALLFCLGDSPGGRGISDSRMTDVYHVDFGTQTFSLPSAILATNTMVGEIASASACDHANPQLSNPSPFQTLGLDLVLECVARYQPKQRSMFTFVCGQLFRRKEFSSHFKNVHGDIHAGLNGWMEQRCPLAYYGCTYSQRRFCPSTQGAKIIHDRHLRSFGVQPCVSTVLEEPSRNCVLGLRSDHLSSLPFEVLQHIAGFLDGFSLCQLACVSRLMRDVCGSLLQSRGMVILQWGKKKYPEGNSSWQIKEKVWRFSTAFCSVNDWKFADILSMADHLKNCSYNVIEKREEAIPLPCMCVTRELTKEGRSLRSVLKPVL</sequence>
<keyword id="KW-0479">Metal-binding</keyword>
<keyword id="KW-0597">Phosphoprotein</keyword>
<keyword id="KW-1185">Reference proteome</keyword>
<keyword id="KW-0832">Ubl conjugation</keyword>
<keyword id="KW-0833">Ubl conjugation pathway</keyword>
<keyword id="KW-0862">Zinc</keyword>
<keyword id="KW-0863">Zinc-finger</keyword>
<proteinExistence type="evidence at protein level"/>
<protein>
    <recommendedName>
        <fullName>F-box only protein 30</fullName>
    </recommendedName>
    <alternativeName>
        <fullName>Muscle ubiquitin ligase of SCF complex in atrophy-1</fullName>
        <shortName>MUSA1</shortName>
    </alternativeName>
</protein>
<organism>
    <name type="scientific">Mus musculus</name>
    <name type="common">Mouse</name>
    <dbReference type="NCBI Taxonomy" id="10090"/>
    <lineage>
        <taxon>Eukaryota</taxon>
        <taxon>Metazoa</taxon>
        <taxon>Chordata</taxon>
        <taxon>Craniata</taxon>
        <taxon>Vertebrata</taxon>
        <taxon>Euteleostomi</taxon>
        <taxon>Mammalia</taxon>
        <taxon>Eutheria</taxon>
        <taxon>Euarchontoglires</taxon>
        <taxon>Glires</taxon>
        <taxon>Rodentia</taxon>
        <taxon>Myomorpha</taxon>
        <taxon>Muroidea</taxon>
        <taxon>Muridae</taxon>
        <taxon>Murinae</taxon>
        <taxon>Mus</taxon>
        <taxon>Mus</taxon>
    </lineage>
</organism>
<gene>
    <name type="primary">Fbxo30</name>
</gene>
<feature type="chain" id="PRO_0000119919" description="F-box only protein 30">
    <location>
        <begin position="1"/>
        <end position="746"/>
    </location>
</feature>
<feature type="domain" description="F-box" evidence="2">
    <location>
        <begin position="611"/>
        <end position="659"/>
    </location>
</feature>
<feature type="zinc finger region" description="TRAF-type" evidence="3">
    <location>
        <begin position="49"/>
        <end position="110"/>
    </location>
</feature>
<feature type="region of interest" description="Disordered" evidence="4">
    <location>
        <begin position="222"/>
        <end position="241"/>
    </location>
</feature>
<feature type="region of interest" description="Disordered" evidence="4">
    <location>
        <begin position="247"/>
        <end position="266"/>
    </location>
</feature>
<feature type="compositionally biased region" description="Basic and acidic residues" evidence="4">
    <location>
        <begin position="225"/>
        <end position="241"/>
    </location>
</feature>
<feature type="compositionally biased region" description="Polar residues" evidence="4">
    <location>
        <begin position="256"/>
        <end position="266"/>
    </location>
</feature>
<feature type="modified residue" description="Phosphoserine" evidence="1">
    <location>
        <position position="383"/>
    </location>
</feature>
<feature type="sequence conflict" description="In Ref. 1; BAB24551." evidence="6" ref="1">
    <original>S</original>
    <variation>G</variation>
    <location>
        <position position="87"/>
    </location>
</feature>
<feature type="sequence conflict" description="In Ref. 1; BAC38931." evidence="6" ref="1">
    <original>A</original>
    <variation>P</variation>
    <location>
        <position position="140"/>
    </location>
</feature>
<feature type="sequence conflict" description="In Ref. 1; BAB24551." evidence="6" ref="1">
    <original>C</original>
    <variation>G</variation>
    <location>
        <position position="296"/>
    </location>
</feature>
<feature type="sequence conflict" description="In Ref. 1; BAB24551." evidence="6" ref="1">
    <original>L</original>
    <variation>S</variation>
    <location>
        <position position="431"/>
    </location>
</feature>
<comment type="function">
    <text evidence="5">Substrate-recognition component of the SCF (SKP1-CUL1-F-box protein)-type E3 ubiquitin ligase complex. Required for muscle atrophy following denervation.</text>
</comment>
<comment type="pathway">
    <text>Protein modification; protein ubiquitination.</text>
</comment>
<comment type="subunit">
    <text evidence="5">Part of a SCF (SKP1-cullin-F-box) protein ligase complex. Interacts with SKP1, CUL1 and RBX1/ROC1.</text>
</comment>
<comment type="induction">
    <text evidence="5">Up-regulated in denervated muscles (at protein level), with highest expression levels around 14 days following denervation. Negatively regulated by the bone morphogenetic protein (BMP) pathway.</text>
</comment>
<comment type="PTM">
    <text evidence="5">Auto-ubiquitinated.</text>
</comment>
<comment type="PTM">
    <text evidence="5">May be neddylated. Neddylation may be required for E3 ligase activity, since it was observed only after purification with o-phenanthroline (PubMed:24076600).</text>
</comment>
<comment type="sequence caution" evidence="6">
    <conflict type="erroneous initiation">
        <sequence resource="EMBL-CDS" id="AAH37691"/>
    </conflict>
    <text>Truncated N-terminus.</text>
</comment>
<name>FBX30_MOUSE</name>
<accession>Q8BJL1</accession>
<accession>Q3UXU4</accession>
<accession>Q8CI21</accession>
<accession>Q9D9X5</accession>
<reference key="1">
    <citation type="journal article" date="2005" name="Science">
        <title>The transcriptional landscape of the mammalian genome.</title>
        <authorList>
            <person name="Carninci P."/>
            <person name="Kasukawa T."/>
            <person name="Katayama S."/>
            <person name="Gough J."/>
            <person name="Frith M.C."/>
            <person name="Maeda N."/>
            <person name="Oyama R."/>
            <person name="Ravasi T."/>
            <person name="Lenhard B."/>
            <person name="Wells C."/>
            <person name="Kodzius R."/>
            <person name="Shimokawa K."/>
            <person name="Bajic V.B."/>
            <person name="Brenner S.E."/>
            <person name="Batalov S."/>
            <person name="Forrest A.R."/>
            <person name="Zavolan M."/>
            <person name="Davis M.J."/>
            <person name="Wilming L.G."/>
            <person name="Aidinis V."/>
            <person name="Allen J.E."/>
            <person name="Ambesi-Impiombato A."/>
            <person name="Apweiler R."/>
            <person name="Aturaliya R.N."/>
            <person name="Bailey T.L."/>
            <person name="Bansal M."/>
            <person name="Baxter L."/>
            <person name="Beisel K.W."/>
            <person name="Bersano T."/>
            <person name="Bono H."/>
            <person name="Chalk A.M."/>
            <person name="Chiu K.P."/>
            <person name="Choudhary V."/>
            <person name="Christoffels A."/>
            <person name="Clutterbuck D.R."/>
            <person name="Crowe M.L."/>
            <person name="Dalla E."/>
            <person name="Dalrymple B.P."/>
            <person name="de Bono B."/>
            <person name="Della Gatta G."/>
            <person name="di Bernardo D."/>
            <person name="Down T."/>
            <person name="Engstrom P."/>
            <person name="Fagiolini M."/>
            <person name="Faulkner G."/>
            <person name="Fletcher C.F."/>
            <person name="Fukushima T."/>
            <person name="Furuno M."/>
            <person name="Futaki S."/>
            <person name="Gariboldi M."/>
            <person name="Georgii-Hemming P."/>
            <person name="Gingeras T.R."/>
            <person name="Gojobori T."/>
            <person name="Green R.E."/>
            <person name="Gustincich S."/>
            <person name="Harbers M."/>
            <person name="Hayashi Y."/>
            <person name="Hensch T.K."/>
            <person name="Hirokawa N."/>
            <person name="Hill D."/>
            <person name="Huminiecki L."/>
            <person name="Iacono M."/>
            <person name="Ikeo K."/>
            <person name="Iwama A."/>
            <person name="Ishikawa T."/>
            <person name="Jakt M."/>
            <person name="Kanapin A."/>
            <person name="Katoh M."/>
            <person name="Kawasawa Y."/>
            <person name="Kelso J."/>
            <person name="Kitamura H."/>
            <person name="Kitano H."/>
            <person name="Kollias G."/>
            <person name="Krishnan S.P."/>
            <person name="Kruger A."/>
            <person name="Kummerfeld S.K."/>
            <person name="Kurochkin I.V."/>
            <person name="Lareau L.F."/>
            <person name="Lazarevic D."/>
            <person name="Lipovich L."/>
            <person name="Liu J."/>
            <person name="Liuni S."/>
            <person name="McWilliam S."/>
            <person name="Madan Babu M."/>
            <person name="Madera M."/>
            <person name="Marchionni L."/>
            <person name="Matsuda H."/>
            <person name="Matsuzawa S."/>
            <person name="Miki H."/>
            <person name="Mignone F."/>
            <person name="Miyake S."/>
            <person name="Morris K."/>
            <person name="Mottagui-Tabar S."/>
            <person name="Mulder N."/>
            <person name="Nakano N."/>
            <person name="Nakauchi H."/>
            <person name="Ng P."/>
            <person name="Nilsson R."/>
            <person name="Nishiguchi S."/>
            <person name="Nishikawa S."/>
            <person name="Nori F."/>
            <person name="Ohara O."/>
            <person name="Okazaki Y."/>
            <person name="Orlando V."/>
            <person name="Pang K.C."/>
            <person name="Pavan W.J."/>
            <person name="Pavesi G."/>
            <person name="Pesole G."/>
            <person name="Petrovsky N."/>
            <person name="Piazza S."/>
            <person name="Reed J."/>
            <person name="Reid J.F."/>
            <person name="Ring B.Z."/>
            <person name="Ringwald M."/>
            <person name="Rost B."/>
            <person name="Ruan Y."/>
            <person name="Salzberg S.L."/>
            <person name="Sandelin A."/>
            <person name="Schneider C."/>
            <person name="Schoenbach C."/>
            <person name="Sekiguchi K."/>
            <person name="Semple C.A."/>
            <person name="Seno S."/>
            <person name="Sessa L."/>
            <person name="Sheng Y."/>
            <person name="Shibata Y."/>
            <person name="Shimada H."/>
            <person name="Shimada K."/>
            <person name="Silva D."/>
            <person name="Sinclair B."/>
            <person name="Sperling S."/>
            <person name="Stupka E."/>
            <person name="Sugiura K."/>
            <person name="Sultana R."/>
            <person name="Takenaka Y."/>
            <person name="Taki K."/>
            <person name="Tammoja K."/>
            <person name="Tan S.L."/>
            <person name="Tang S."/>
            <person name="Taylor M.S."/>
            <person name="Tegner J."/>
            <person name="Teichmann S.A."/>
            <person name="Ueda H.R."/>
            <person name="van Nimwegen E."/>
            <person name="Verardo R."/>
            <person name="Wei C.L."/>
            <person name="Yagi K."/>
            <person name="Yamanishi H."/>
            <person name="Zabarovsky E."/>
            <person name="Zhu S."/>
            <person name="Zimmer A."/>
            <person name="Hide W."/>
            <person name="Bult C."/>
            <person name="Grimmond S.M."/>
            <person name="Teasdale R.D."/>
            <person name="Liu E.T."/>
            <person name="Brusic V."/>
            <person name="Quackenbush J."/>
            <person name="Wahlestedt C."/>
            <person name="Mattick J.S."/>
            <person name="Hume D.A."/>
            <person name="Kai C."/>
            <person name="Sasaki D."/>
            <person name="Tomaru Y."/>
            <person name="Fukuda S."/>
            <person name="Kanamori-Katayama M."/>
            <person name="Suzuki M."/>
            <person name="Aoki J."/>
            <person name="Arakawa T."/>
            <person name="Iida J."/>
            <person name="Imamura K."/>
            <person name="Itoh M."/>
            <person name="Kato T."/>
            <person name="Kawaji H."/>
            <person name="Kawagashira N."/>
            <person name="Kawashima T."/>
            <person name="Kojima M."/>
            <person name="Kondo S."/>
            <person name="Konno H."/>
            <person name="Nakano K."/>
            <person name="Ninomiya N."/>
            <person name="Nishio T."/>
            <person name="Okada M."/>
            <person name="Plessy C."/>
            <person name="Shibata K."/>
            <person name="Shiraki T."/>
            <person name="Suzuki S."/>
            <person name="Tagami M."/>
            <person name="Waki K."/>
            <person name="Watahiki A."/>
            <person name="Okamura-Oho Y."/>
            <person name="Suzuki H."/>
            <person name="Kawai J."/>
            <person name="Hayashizaki Y."/>
        </authorList>
    </citation>
    <scope>NUCLEOTIDE SEQUENCE [LARGE SCALE MRNA]</scope>
    <source>
        <strain>C57BL/6J</strain>
        <tissue>Testis</tissue>
        <tissue>Wolffian duct</tissue>
    </source>
</reference>
<reference key="2">
    <citation type="submission" date="2005-07" db="EMBL/GenBank/DDBJ databases">
        <authorList>
            <person name="Mural R.J."/>
            <person name="Adams M.D."/>
            <person name="Myers E.W."/>
            <person name="Smith H.O."/>
            <person name="Venter J.C."/>
        </authorList>
    </citation>
    <scope>NUCLEOTIDE SEQUENCE [LARGE SCALE GENOMIC DNA]</scope>
</reference>
<reference key="3">
    <citation type="journal article" date="2004" name="Genome Res.">
        <title>The status, quality, and expansion of the NIH full-length cDNA project: the Mammalian Gene Collection (MGC).</title>
        <authorList>
            <consortium name="The MGC Project Team"/>
        </authorList>
    </citation>
    <scope>NUCLEOTIDE SEQUENCE [LARGE SCALE MRNA] OF 320-746</scope>
    <source>
        <strain>FVB/N</strain>
    </source>
</reference>
<reference key="4">
    <citation type="journal article" date="2010" name="Cell">
        <title>A tissue-specific atlas of mouse protein phosphorylation and expression.</title>
        <authorList>
            <person name="Huttlin E.L."/>
            <person name="Jedrychowski M.P."/>
            <person name="Elias J.E."/>
            <person name="Goswami T."/>
            <person name="Rad R."/>
            <person name="Beausoleil S.A."/>
            <person name="Villen J."/>
            <person name="Haas W."/>
            <person name="Sowa M.E."/>
            <person name="Gygi S.P."/>
        </authorList>
    </citation>
    <scope>IDENTIFICATION BY MASS SPECTROMETRY [LARGE SCALE ANALYSIS]</scope>
    <source>
        <tissue>Heart</tissue>
        <tissue>Spleen</tissue>
    </source>
</reference>
<reference key="5">
    <citation type="journal article" date="2013" name="Nat. Genet.">
        <title>BMP signaling controls muscle mass.</title>
        <authorList>
            <person name="Sartori R."/>
            <person name="Schirwis E."/>
            <person name="Blaauw B."/>
            <person name="Bortolanza S."/>
            <person name="Zhao J."/>
            <person name="Enzo E."/>
            <person name="Stantzou A."/>
            <person name="Mouisel E."/>
            <person name="Toniolo L."/>
            <person name="Ferry A."/>
            <person name="Stricker S."/>
            <person name="Goldberg A.L."/>
            <person name="Dupont S."/>
            <person name="Piccolo S."/>
            <person name="Amthor H."/>
            <person name="Sandri M."/>
        </authorList>
    </citation>
    <scope>FUNCTION</scope>
    <scope>IDENTIFICATION IN SCF COMPLEX</scope>
    <scope>AUTOUBIQUITINATION</scope>
    <scope>INDUCTION</scope>
</reference>